<name>MNMG_MYXXD</name>
<evidence type="ECO:0000255" key="1">
    <source>
        <dbReference type="HAMAP-Rule" id="MF_00129"/>
    </source>
</evidence>
<dbReference type="EMBL" id="CP000113">
    <property type="protein sequence ID" value="ABF88025.1"/>
    <property type="molecule type" value="Genomic_DNA"/>
</dbReference>
<dbReference type="RefSeq" id="WP_011557396.1">
    <property type="nucleotide sequence ID" value="NC_008095.1"/>
</dbReference>
<dbReference type="SMR" id="Q1CVH6"/>
<dbReference type="STRING" id="246197.MXAN_7494"/>
<dbReference type="EnsemblBacteria" id="ABF88025">
    <property type="protein sequence ID" value="ABF88025"/>
    <property type="gene ID" value="MXAN_7494"/>
</dbReference>
<dbReference type="GeneID" id="41364627"/>
<dbReference type="KEGG" id="mxa:MXAN_7494"/>
<dbReference type="eggNOG" id="COG0445">
    <property type="taxonomic scope" value="Bacteria"/>
</dbReference>
<dbReference type="HOGENOM" id="CLU_007831_2_2_7"/>
<dbReference type="OrthoDB" id="9815560at2"/>
<dbReference type="Proteomes" id="UP000002402">
    <property type="component" value="Chromosome"/>
</dbReference>
<dbReference type="GO" id="GO:0005829">
    <property type="term" value="C:cytosol"/>
    <property type="evidence" value="ECO:0007669"/>
    <property type="project" value="TreeGrafter"/>
</dbReference>
<dbReference type="GO" id="GO:0050660">
    <property type="term" value="F:flavin adenine dinucleotide binding"/>
    <property type="evidence" value="ECO:0007669"/>
    <property type="project" value="UniProtKB-UniRule"/>
</dbReference>
<dbReference type="GO" id="GO:0030488">
    <property type="term" value="P:tRNA methylation"/>
    <property type="evidence" value="ECO:0007669"/>
    <property type="project" value="TreeGrafter"/>
</dbReference>
<dbReference type="GO" id="GO:0002098">
    <property type="term" value="P:tRNA wobble uridine modification"/>
    <property type="evidence" value="ECO:0007669"/>
    <property type="project" value="InterPro"/>
</dbReference>
<dbReference type="FunFam" id="1.10.150.570:FF:000001">
    <property type="entry name" value="tRNA uridine 5-carboxymethylaminomethyl modification enzyme MnmG"/>
    <property type="match status" value="1"/>
</dbReference>
<dbReference type="FunFam" id="3.50.50.60:FF:000002">
    <property type="entry name" value="tRNA uridine 5-carboxymethylaminomethyl modification enzyme MnmG"/>
    <property type="match status" value="1"/>
</dbReference>
<dbReference type="Gene3D" id="3.50.50.60">
    <property type="entry name" value="FAD/NAD(P)-binding domain"/>
    <property type="match status" value="2"/>
</dbReference>
<dbReference type="Gene3D" id="1.10.150.570">
    <property type="entry name" value="GidA associated domain, C-terminal subdomain"/>
    <property type="match status" value="1"/>
</dbReference>
<dbReference type="Gene3D" id="1.10.10.1800">
    <property type="entry name" value="tRNA uridine 5-carboxymethylaminomethyl modification enzyme MnmG/GidA"/>
    <property type="match status" value="1"/>
</dbReference>
<dbReference type="HAMAP" id="MF_00129">
    <property type="entry name" value="MnmG_GidA"/>
    <property type="match status" value="1"/>
</dbReference>
<dbReference type="InterPro" id="IPR036188">
    <property type="entry name" value="FAD/NAD-bd_sf"/>
</dbReference>
<dbReference type="InterPro" id="IPR049312">
    <property type="entry name" value="GIDA_C_N"/>
</dbReference>
<dbReference type="InterPro" id="IPR004416">
    <property type="entry name" value="MnmG"/>
</dbReference>
<dbReference type="InterPro" id="IPR002218">
    <property type="entry name" value="MnmG-rel"/>
</dbReference>
<dbReference type="InterPro" id="IPR020595">
    <property type="entry name" value="MnmG-rel_CS"/>
</dbReference>
<dbReference type="InterPro" id="IPR026904">
    <property type="entry name" value="MnmG_C"/>
</dbReference>
<dbReference type="InterPro" id="IPR047001">
    <property type="entry name" value="MnmG_C_subdom"/>
</dbReference>
<dbReference type="InterPro" id="IPR044920">
    <property type="entry name" value="MnmG_C_subdom_sf"/>
</dbReference>
<dbReference type="InterPro" id="IPR040131">
    <property type="entry name" value="MnmG_N"/>
</dbReference>
<dbReference type="NCBIfam" id="TIGR00136">
    <property type="entry name" value="mnmG_gidA"/>
    <property type="match status" value="1"/>
</dbReference>
<dbReference type="PANTHER" id="PTHR11806">
    <property type="entry name" value="GLUCOSE INHIBITED DIVISION PROTEIN A"/>
    <property type="match status" value="1"/>
</dbReference>
<dbReference type="PANTHER" id="PTHR11806:SF0">
    <property type="entry name" value="PROTEIN MTO1 HOMOLOG, MITOCHONDRIAL"/>
    <property type="match status" value="1"/>
</dbReference>
<dbReference type="Pfam" id="PF01134">
    <property type="entry name" value="GIDA"/>
    <property type="match status" value="1"/>
</dbReference>
<dbReference type="Pfam" id="PF21680">
    <property type="entry name" value="GIDA_C_1st"/>
    <property type="match status" value="1"/>
</dbReference>
<dbReference type="Pfam" id="PF13932">
    <property type="entry name" value="SAM_GIDA_C"/>
    <property type="match status" value="1"/>
</dbReference>
<dbReference type="PRINTS" id="PR00411">
    <property type="entry name" value="PNDRDTASEI"/>
</dbReference>
<dbReference type="SMART" id="SM01228">
    <property type="entry name" value="GIDA_assoc_3"/>
    <property type="match status" value="1"/>
</dbReference>
<dbReference type="SUPFAM" id="SSF51905">
    <property type="entry name" value="FAD/NAD(P)-binding domain"/>
    <property type="match status" value="1"/>
</dbReference>
<dbReference type="PROSITE" id="PS01280">
    <property type="entry name" value="GIDA_1"/>
    <property type="match status" value="1"/>
</dbReference>
<comment type="function">
    <text evidence="1">NAD-binding protein involved in the addition of a carboxymethylaminomethyl (cmnm) group at the wobble position (U34) of certain tRNAs, forming tRNA-cmnm(5)s(2)U34.</text>
</comment>
<comment type="cofactor">
    <cofactor evidence="1">
        <name>FAD</name>
        <dbReference type="ChEBI" id="CHEBI:57692"/>
    </cofactor>
</comment>
<comment type="subunit">
    <text evidence="1">Homodimer. Heterotetramer of two MnmE and two MnmG subunits.</text>
</comment>
<comment type="subcellular location">
    <subcellularLocation>
        <location evidence="1">Cytoplasm</location>
    </subcellularLocation>
</comment>
<comment type="similarity">
    <text evidence="1">Belongs to the MnmG family.</text>
</comment>
<gene>
    <name evidence="1" type="primary">mnmG</name>
    <name evidence="1" type="synonym">gidA</name>
    <name type="ordered locus">MXAN_7494</name>
</gene>
<protein>
    <recommendedName>
        <fullName evidence="1">tRNA uridine 5-carboxymethylaminomethyl modification enzyme MnmG</fullName>
    </recommendedName>
    <alternativeName>
        <fullName evidence="1">Glucose-inhibited division protein A</fullName>
    </alternativeName>
</protein>
<feature type="chain" id="PRO_0000345303" description="tRNA uridine 5-carboxymethylaminomethyl modification enzyme MnmG">
    <location>
        <begin position="1"/>
        <end position="615"/>
    </location>
</feature>
<feature type="binding site" evidence="1">
    <location>
        <begin position="11"/>
        <end position="16"/>
    </location>
    <ligand>
        <name>FAD</name>
        <dbReference type="ChEBI" id="CHEBI:57692"/>
    </ligand>
</feature>
<feature type="binding site" evidence="1">
    <location>
        <begin position="278"/>
        <end position="292"/>
    </location>
    <ligand>
        <name>NAD(+)</name>
        <dbReference type="ChEBI" id="CHEBI:57540"/>
    </ligand>
</feature>
<sequence length="615" mass="66133">MGLRYDVIVVGLGHAGSEAALACARMGLATLGLTLKRERSAVLSCNPAVGGTAKGHLVRELDALGGEMGRAADQVGTHFKTLNASKGPAVQASRLLCDRDAYAVGMQAVLFSQPNLTVREGEVAALVAGGGRVEGVVLGDGTQVSASAVLLTTGTFLQALMHVGEQKEVGGRLGDDAARGLSESLRALGFTLGRFKTGTPARLARASIDWDALEPQPGDTRVRPFSWRTKVEGEGGMPFPRQPSVTCALTETTPRTHAVLRDNLHRSPLYQGDIVGRGPRYCPSLEDKVVRFASRERHQVFLEPEGPTSPLVYPAGLSTSLPADVQLTFLHTIRGLEQVEVVRFGYAVEYDYAPPTQLKATLETKAIAGLYFAGQLNGTSGYEEAAFQGLWAGINAALQLKGEPPLLPGRDEAHGAVLVDDLVTKGVDEPFRMFTSRSEHRLKLREGNADLRLARHGHRVGLLPREALERVEARGRAVTEEVARLKRTGLAARLRRPEVTYAQLGEGREDWPVLSPDVAEEVEVEVKYEGYVAQAARAAAREAESTDRWRIPEGYCFHEVRGLSSEAVEKLTAHRPGTVGQARRIPGLTPAAVSLLLVALKRGTEAPAVCAQPED</sequence>
<proteinExistence type="inferred from homology"/>
<accession>Q1CVH6</accession>
<organism>
    <name type="scientific">Myxococcus xanthus (strain DK1622)</name>
    <dbReference type="NCBI Taxonomy" id="246197"/>
    <lineage>
        <taxon>Bacteria</taxon>
        <taxon>Pseudomonadati</taxon>
        <taxon>Myxococcota</taxon>
        <taxon>Myxococcia</taxon>
        <taxon>Myxococcales</taxon>
        <taxon>Cystobacterineae</taxon>
        <taxon>Myxococcaceae</taxon>
        <taxon>Myxococcus</taxon>
    </lineage>
</organism>
<reference key="1">
    <citation type="journal article" date="2006" name="Proc. Natl. Acad. Sci. U.S.A.">
        <title>Evolution of sensory complexity recorded in a myxobacterial genome.</title>
        <authorList>
            <person name="Goldman B.S."/>
            <person name="Nierman W.C."/>
            <person name="Kaiser D."/>
            <person name="Slater S.C."/>
            <person name="Durkin A.S."/>
            <person name="Eisen J.A."/>
            <person name="Ronning C.M."/>
            <person name="Barbazuk W.B."/>
            <person name="Blanchard M."/>
            <person name="Field C."/>
            <person name="Halling C."/>
            <person name="Hinkle G."/>
            <person name="Iartchuk O."/>
            <person name="Kim H.S."/>
            <person name="Mackenzie C."/>
            <person name="Madupu R."/>
            <person name="Miller N."/>
            <person name="Shvartsbeyn A."/>
            <person name="Sullivan S.A."/>
            <person name="Vaudin M."/>
            <person name="Wiegand R."/>
            <person name="Kaplan H.B."/>
        </authorList>
    </citation>
    <scope>NUCLEOTIDE SEQUENCE [LARGE SCALE GENOMIC DNA]</scope>
    <source>
        <strain>DK1622</strain>
    </source>
</reference>
<keyword id="KW-0963">Cytoplasm</keyword>
<keyword id="KW-0274">FAD</keyword>
<keyword id="KW-0285">Flavoprotein</keyword>
<keyword id="KW-0520">NAD</keyword>
<keyword id="KW-1185">Reference proteome</keyword>
<keyword id="KW-0819">tRNA processing</keyword>